<evidence type="ECO:0000250" key="1"/>
<evidence type="ECO:0000305" key="2"/>
<dbReference type="EC" id="4.1.2.50"/>
<dbReference type="EMBL" id="L42023">
    <property type="protein sequence ID" value="AAC22843.1"/>
    <property type="molecule type" value="Genomic_DNA"/>
</dbReference>
<dbReference type="PIR" id="F64021">
    <property type="entry name" value="F64021"/>
</dbReference>
<dbReference type="RefSeq" id="NP_439346.1">
    <property type="nucleotide sequence ID" value="NC_000907.1"/>
</dbReference>
<dbReference type="SMR" id="P44123"/>
<dbReference type="STRING" id="71421.HI_1190"/>
<dbReference type="EnsemblBacteria" id="AAC22843">
    <property type="protein sequence ID" value="AAC22843"/>
    <property type="gene ID" value="HI_1190"/>
</dbReference>
<dbReference type="KEGG" id="hin:HI_1190"/>
<dbReference type="PATRIC" id="fig|71421.8.peg.1242"/>
<dbReference type="eggNOG" id="COG0720">
    <property type="taxonomic scope" value="Bacteria"/>
</dbReference>
<dbReference type="HOGENOM" id="CLU_111016_1_1_6"/>
<dbReference type="OrthoDB" id="9804698at2"/>
<dbReference type="PhylomeDB" id="P44123"/>
<dbReference type="BioCyc" id="HINF71421:G1GJ1-1221-MONOMER"/>
<dbReference type="UniPathway" id="UPA00391"/>
<dbReference type="Proteomes" id="UP000000579">
    <property type="component" value="Chromosome"/>
</dbReference>
<dbReference type="GO" id="GO:0070497">
    <property type="term" value="F:6-carboxytetrahydropterin synthase activity"/>
    <property type="evidence" value="ECO:0000318"/>
    <property type="project" value="GO_Central"/>
</dbReference>
<dbReference type="GO" id="GO:0046872">
    <property type="term" value="F:metal ion binding"/>
    <property type="evidence" value="ECO:0007669"/>
    <property type="project" value="UniProtKB-KW"/>
</dbReference>
<dbReference type="GO" id="GO:0008616">
    <property type="term" value="P:queuosine biosynthetic process"/>
    <property type="evidence" value="ECO:0007669"/>
    <property type="project" value="UniProtKB-KW"/>
</dbReference>
<dbReference type="FunFam" id="3.30.479.10:FF:000011">
    <property type="entry name" value="6-carboxy-5,6,7,8-tetrahydropterin synthase"/>
    <property type="match status" value="1"/>
</dbReference>
<dbReference type="Gene3D" id="3.30.479.10">
    <property type="entry name" value="6-pyruvoyl tetrahydropterin synthase/QueD"/>
    <property type="match status" value="1"/>
</dbReference>
<dbReference type="InterPro" id="IPR007115">
    <property type="entry name" value="6-PTP_synth/QueD"/>
</dbReference>
<dbReference type="InterPro" id="IPR038418">
    <property type="entry name" value="6-PTP_synth/QueD_sf"/>
</dbReference>
<dbReference type="NCBIfam" id="TIGR00039">
    <property type="entry name" value="6PTHBS"/>
    <property type="match status" value="1"/>
</dbReference>
<dbReference type="NCBIfam" id="TIGR03367">
    <property type="entry name" value="queuosine_QueD"/>
    <property type="match status" value="1"/>
</dbReference>
<dbReference type="PANTHER" id="PTHR12589:SF7">
    <property type="entry name" value="6-PYRUVOYL TETRAHYDROBIOPTERIN SYNTHASE"/>
    <property type="match status" value="1"/>
</dbReference>
<dbReference type="PANTHER" id="PTHR12589">
    <property type="entry name" value="PYRUVOYL TETRAHYDROBIOPTERIN SYNTHASE"/>
    <property type="match status" value="1"/>
</dbReference>
<dbReference type="Pfam" id="PF01242">
    <property type="entry name" value="PTPS"/>
    <property type="match status" value="1"/>
</dbReference>
<dbReference type="PIRSF" id="PIRSF006113">
    <property type="entry name" value="PTP_synth"/>
    <property type="match status" value="1"/>
</dbReference>
<dbReference type="SUPFAM" id="SSF55620">
    <property type="entry name" value="Tetrahydrobiopterin biosynthesis enzymes-like"/>
    <property type="match status" value="1"/>
</dbReference>
<proteinExistence type="inferred from homology"/>
<gene>
    <name type="primary">queD</name>
    <name type="ordered locus">HI_1190</name>
</gene>
<accession>P44123</accession>
<sequence length="141" mass="16322">MFKISKEFSFDMAHLLDGHDGKCQNLHGHTYKLQVEISGDLYKSGAKKAMVIDFSDLKSIVKKVILDPMDHAFIYDQTNERESQIATLLQKLNSKTFGVPFRTTAEEIARFIFNRLKHDEQLSISSIRLWETPTSFCEYQE</sequence>
<organism>
    <name type="scientific">Haemophilus influenzae (strain ATCC 51907 / DSM 11121 / KW20 / Rd)</name>
    <dbReference type="NCBI Taxonomy" id="71421"/>
    <lineage>
        <taxon>Bacteria</taxon>
        <taxon>Pseudomonadati</taxon>
        <taxon>Pseudomonadota</taxon>
        <taxon>Gammaproteobacteria</taxon>
        <taxon>Pasteurellales</taxon>
        <taxon>Pasteurellaceae</taxon>
        <taxon>Haemophilus</taxon>
    </lineage>
</organism>
<feature type="chain" id="PRO_0000057925" description="6-carboxy-5,6,7,8-tetrahydropterin synthase">
    <location>
        <begin position="1"/>
        <end position="141"/>
    </location>
</feature>
<feature type="active site" description="Proton acceptor" evidence="1">
    <location>
        <position position="23"/>
    </location>
</feature>
<feature type="active site" description="Charge relay system" evidence="1">
    <location>
        <position position="71"/>
    </location>
</feature>
<feature type="active site" description="Charge relay system" evidence="1">
    <location>
        <position position="131"/>
    </location>
</feature>
<feature type="binding site" evidence="1">
    <location>
        <position position="14"/>
    </location>
    <ligand>
        <name>Zn(2+)</name>
        <dbReference type="ChEBI" id="CHEBI:29105"/>
    </ligand>
</feature>
<feature type="binding site" evidence="1">
    <location>
        <position position="27"/>
    </location>
    <ligand>
        <name>Zn(2+)</name>
        <dbReference type="ChEBI" id="CHEBI:29105"/>
    </ligand>
</feature>
<feature type="binding site" evidence="1">
    <location>
        <position position="29"/>
    </location>
    <ligand>
        <name>Zn(2+)</name>
        <dbReference type="ChEBI" id="CHEBI:29105"/>
    </ligand>
</feature>
<keyword id="KW-0456">Lyase</keyword>
<keyword id="KW-0479">Metal-binding</keyword>
<keyword id="KW-0671">Queuosine biosynthesis</keyword>
<keyword id="KW-1185">Reference proteome</keyword>
<keyword id="KW-0862">Zinc</keyword>
<reference key="1">
    <citation type="journal article" date="1995" name="Science">
        <title>Whole-genome random sequencing and assembly of Haemophilus influenzae Rd.</title>
        <authorList>
            <person name="Fleischmann R.D."/>
            <person name="Adams M.D."/>
            <person name="White O."/>
            <person name="Clayton R.A."/>
            <person name="Kirkness E.F."/>
            <person name="Kerlavage A.R."/>
            <person name="Bult C.J."/>
            <person name="Tomb J.-F."/>
            <person name="Dougherty B.A."/>
            <person name="Merrick J.M."/>
            <person name="McKenney K."/>
            <person name="Sutton G.G."/>
            <person name="FitzHugh W."/>
            <person name="Fields C.A."/>
            <person name="Gocayne J.D."/>
            <person name="Scott J.D."/>
            <person name="Shirley R."/>
            <person name="Liu L.-I."/>
            <person name="Glodek A."/>
            <person name="Kelley J.M."/>
            <person name="Weidman J.F."/>
            <person name="Phillips C.A."/>
            <person name="Spriggs T."/>
            <person name="Hedblom E."/>
            <person name="Cotton M.D."/>
            <person name="Utterback T.R."/>
            <person name="Hanna M.C."/>
            <person name="Nguyen D.T."/>
            <person name="Saudek D.M."/>
            <person name="Brandon R.C."/>
            <person name="Fine L.D."/>
            <person name="Fritchman J.L."/>
            <person name="Fuhrmann J.L."/>
            <person name="Geoghagen N.S.M."/>
            <person name="Gnehm C.L."/>
            <person name="McDonald L.A."/>
            <person name="Small K.V."/>
            <person name="Fraser C.M."/>
            <person name="Smith H.O."/>
            <person name="Venter J.C."/>
        </authorList>
    </citation>
    <scope>NUCLEOTIDE SEQUENCE [LARGE SCALE GENOMIC DNA]</scope>
    <source>
        <strain>ATCC 51907 / DSM 11121 / KW20 / Rd</strain>
    </source>
</reference>
<protein>
    <recommendedName>
        <fullName>6-carboxy-5,6,7,8-tetrahydropterin synthase</fullName>
        <shortName>CPH4 synthase</shortName>
        <ecNumber>4.1.2.50</ecNumber>
    </recommendedName>
    <alternativeName>
        <fullName>Queuosine biosynthesis protein QueD</fullName>
    </alternativeName>
</protein>
<comment type="function">
    <text evidence="1">Catalyzes the conversion of 7,8-dihydroneopterin triphosphate (H2NTP) to 6-carboxy-5,6,7,8-tetrahydropterin (CPH4) and acetaldehyde.</text>
</comment>
<comment type="catalytic activity">
    <reaction>
        <text>7,8-dihydroneopterin 3'-triphosphate + H2O = 6-carboxy-5,6,7,8-tetrahydropterin + triphosphate + acetaldehyde + 2 H(+)</text>
        <dbReference type="Rhea" id="RHEA:27966"/>
        <dbReference type="ChEBI" id="CHEBI:15343"/>
        <dbReference type="ChEBI" id="CHEBI:15377"/>
        <dbReference type="ChEBI" id="CHEBI:15378"/>
        <dbReference type="ChEBI" id="CHEBI:18036"/>
        <dbReference type="ChEBI" id="CHEBI:58462"/>
        <dbReference type="ChEBI" id="CHEBI:61032"/>
        <dbReference type="EC" id="4.1.2.50"/>
    </reaction>
</comment>
<comment type="cofactor">
    <cofactor evidence="1">
        <name>Zn(2+)</name>
        <dbReference type="ChEBI" id="CHEBI:29105"/>
    </cofactor>
    <text evidence="1">Binds 1 zinc ion per subunit.</text>
</comment>
<comment type="pathway">
    <text>Purine metabolism; 7-cyano-7-deazaguanine biosynthesis.</text>
</comment>
<comment type="miscellaneous">
    <text evidence="1">The active site is at the interface between 2 subunits. The proton acceptor Cys is on one subunit, and the charge relay system is on the other subunit (By similarity).</text>
</comment>
<comment type="similarity">
    <text evidence="2">Belongs to the PTPS family. QueD subfamily.</text>
</comment>
<name>QUED_HAEIN</name>